<protein>
    <recommendedName>
        <fullName>8-amino-7-oxononanoate synthase</fullName>
        <shortName>AONS</shortName>
        <ecNumber>2.3.1.47</ecNumber>
    </recommendedName>
    <alternativeName>
        <fullName>7-keto-8-amino-pelargonic acid synthase</fullName>
        <shortName>7-KAP synthase</shortName>
        <shortName>KAPA synthase</shortName>
    </alternativeName>
    <alternativeName>
        <fullName>8-amino-7-ketopelargonate synthase</fullName>
    </alternativeName>
    <alternativeName>
        <fullName>Alpha-oxoamine synthase</fullName>
    </alternativeName>
</protein>
<reference key="1">
    <citation type="submission" date="2008-03" db="EMBL/GenBank/DDBJ databases">
        <title>Complete sequence of chromosome of Methylobacterium radiotolerans JCM 2831.</title>
        <authorList>
            <consortium name="US DOE Joint Genome Institute"/>
            <person name="Copeland A."/>
            <person name="Lucas S."/>
            <person name="Lapidus A."/>
            <person name="Glavina del Rio T."/>
            <person name="Dalin E."/>
            <person name="Tice H."/>
            <person name="Bruce D."/>
            <person name="Goodwin L."/>
            <person name="Pitluck S."/>
            <person name="Kiss H."/>
            <person name="Brettin T."/>
            <person name="Detter J.C."/>
            <person name="Han C."/>
            <person name="Kuske C.R."/>
            <person name="Schmutz J."/>
            <person name="Larimer F."/>
            <person name="Land M."/>
            <person name="Hauser L."/>
            <person name="Kyrpides N."/>
            <person name="Mikhailova N."/>
            <person name="Marx C.J."/>
            <person name="Richardson P."/>
        </authorList>
    </citation>
    <scope>NUCLEOTIDE SEQUENCE [LARGE SCALE GENOMIC DNA]</scope>
    <source>
        <strain>ATCC 27329 / DSM 1819 / JCM 2831 / NBRC 15690 / NCIMB 10815 / 0-1</strain>
    </source>
</reference>
<gene>
    <name type="ordered locus">Mrad2831_0866</name>
</gene>
<proteinExistence type="inferred from homology"/>
<keyword id="KW-0012">Acyltransferase</keyword>
<keyword id="KW-0093">Biotin biosynthesis</keyword>
<keyword id="KW-0663">Pyridoxal phosphate</keyword>
<keyword id="KW-0808">Transferase</keyword>
<accession>B1LYP9</accession>
<organism>
    <name type="scientific">Methylobacterium radiotolerans (strain ATCC 27329 / DSM 1819 / JCM 2831 / NBRC 15690 / NCIMB 10815 / 0-1)</name>
    <dbReference type="NCBI Taxonomy" id="426355"/>
    <lineage>
        <taxon>Bacteria</taxon>
        <taxon>Pseudomonadati</taxon>
        <taxon>Pseudomonadota</taxon>
        <taxon>Alphaproteobacteria</taxon>
        <taxon>Hyphomicrobiales</taxon>
        <taxon>Methylobacteriaceae</taxon>
        <taxon>Methylobacterium</taxon>
    </lineage>
</organism>
<name>BIOF_METRJ</name>
<dbReference type="EC" id="2.3.1.47"/>
<dbReference type="EMBL" id="CP001001">
    <property type="protein sequence ID" value="ACB22876.1"/>
    <property type="molecule type" value="Genomic_DNA"/>
</dbReference>
<dbReference type="RefSeq" id="WP_012317869.1">
    <property type="nucleotide sequence ID" value="NC_010505.1"/>
</dbReference>
<dbReference type="SMR" id="B1LYP9"/>
<dbReference type="STRING" id="426355.Mrad2831_0866"/>
<dbReference type="GeneID" id="6136882"/>
<dbReference type="KEGG" id="mrd:Mrad2831_0866"/>
<dbReference type="eggNOG" id="COG0156">
    <property type="taxonomic scope" value="Bacteria"/>
</dbReference>
<dbReference type="HOGENOM" id="CLU_015846_11_2_5"/>
<dbReference type="OrthoDB" id="9807157at2"/>
<dbReference type="UniPathway" id="UPA00078"/>
<dbReference type="Proteomes" id="UP000006589">
    <property type="component" value="Chromosome"/>
</dbReference>
<dbReference type="GO" id="GO:0008710">
    <property type="term" value="F:8-amino-7-oxononanoate synthase activity"/>
    <property type="evidence" value="ECO:0007669"/>
    <property type="project" value="UniProtKB-EC"/>
</dbReference>
<dbReference type="GO" id="GO:0030170">
    <property type="term" value="F:pyridoxal phosphate binding"/>
    <property type="evidence" value="ECO:0007669"/>
    <property type="project" value="InterPro"/>
</dbReference>
<dbReference type="GO" id="GO:0009102">
    <property type="term" value="P:biotin biosynthetic process"/>
    <property type="evidence" value="ECO:0007669"/>
    <property type="project" value="UniProtKB-UniPathway"/>
</dbReference>
<dbReference type="Gene3D" id="3.90.1150.10">
    <property type="entry name" value="Aspartate Aminotransferase, domain 1"/>
    <property type="match status" value="1"/>
</dbReference>
<dbReference type="Gene3D" id="3.40.640.10">
    <property type="entry name" value="Type I PLP-dependent aspartate aminotransferase-like (Major domain)"/>
    <property type="match status" value="1"/>
</dbReference>
<dbReference type="InterPro" id="IPR001917">
    <property type="entry name" value="Aminotrans_II_pyridoxalP_BS"/>
</dbReference>
<dbReference type="InterPro" id="IPR004839">
    <property type="entry name" value="Aminotransferase_I/II_large"/>
</dbReference>
<dbReference type="InterPro" id="IPR050087">
    <property type="entry name" value="AON_synthase_class-II"/>
</dbReference>
<dbReference type="InterPro" id="IPR015424">
    <property type="entry name" value="PyrdxlP-dep_Trfase"/>
</dbReference>
<dbReference type="InterPro" id="IPR015421">
    <property type="entry name" value="PyrdxlP-dep_Trfase_major"/>
</dbReference>
<dbReference type="InterPro" id="IPR015422">
    <property type="entry name" value="PyrdxlP-dep_Trfase_small"/>
</dbReference>
<dbReference type="PANTHER" id="PTHR13693:SF100">
    <property type="entry name" value="8-AMINO-7-OXONONANOATE SYNTHASE"/>
    <property type="match status" value="1"/>
</dbReference>
<dbReference type="PANTHER" id="PTHR13693">
    <property type="entry name" value="CLASS II AMINOTRANSFERASE/8-AMINO-7-OXONONANOATE SYNTHASE"/>
    <property type="match status" value="1"/>
</dbReference>
<dbReference type="Pfam" id="PF00155">
    <property type="entry name" value="Aminotran_1_2"/>
    <property type="match status" value="1"/>
</dbReference>
<dbReference type="SUPFAM" id="SSF53383">
    <property type="entry name" value="PLP-dependent transferases"/>
    <property type="match status" value="1"/>
</dbReference>
<dbReference type="PROSITE" id="PS00599">
    <property type="entry name" value="AA_TRANSFER_CLASS_2"/>
    <property type="match status" value="1"/>
</dbReference>
<feature type="chain" id="PRO_0000381028" description="8-amino-7-oxononanoate synthase">
    <location>
        <begin position="1"/>
        <end position="374"/>
    </location>
</feature>
<feature type="binding site" evidence="1">
    <location>
        <position position="22"/>
    </location>
    <ligand>
        <name>substrate</name>
    </ligand>
</feature>
<feature type="binding site" evidence="1">
    <location>
        <position position="29"/>
    </location>
    <ligand>
        <name>substrate</name>
    </ligand>
</feature>
<feature type="binding site" evidence="1">
    <location>
        <begin position="109"/>
        <end position="110"/>
    </location>
    <ligand>
        <name>pyridoxal 5'-phosphate</name>
        <dbReference type="ChEBI" id="CHEBI:597326"/>
    </ligand>
</feature>
<feature type="binding site" evidence="1">
    <location>
        <position position="134"/>
    </location>
    <ligand>
        <name>substrate</name>
    </ligand>
</feature>
<feature type="binding site" evidence="1">
    <location>
        <position position="182"/>
    </location>
    <ligand>
        <name>pyridoxal 5'-phosphate</name>
        <dbReference type="ChEBI" id="CHEBI:597326"/>
    </ligand>
</feature>
<feature type="binding site" evidence="1">
    <location>
        <begin position="207"/>
        <end position="210"/>
    </location>
    <ligand>
        <name>pyridoxal 5'-phosphate</name>
        <dbReference type="ChEBI" id="CHEBI:597326"/>
    </ligand>
</feature>
<feature type="binding site" evidence="1">
    <location>
        <begin position="227"/>
        <end position="230"/>
    </location>
    <ligand>
        <name>pyridoxal 5'-phosphate</name>
        <dbReference type="ChEBI" id="CHEBI:597326"/>
    </ligand>
</feature>
<feature type="binding site" evidence="1">
    <location>
        <position position="339"/>
    </location>
    <ligand>
        <name>substrate</name>
    </ligand>
</feature>
<feature type="modified residue" description="N6-(pyridoxal phosphate)lysine" evidence="1">
    <location>
        <position position="230"/>
    </location>
</feature>
<sequence length="374" mass="38528">MDSLDAFATGKLDALEAGSLRRKLVPTERGSGAAAARRGRALVSFSCNDYLGLSHHPRVIAAAQAAAASHGAGAGGSRLVTGDHPYLGALEDGLARHKGAEAALVFGSGYLANLGITPALAGRGDLVLLDELSHACMWAGARLSGAQVMTFRHNDPGDLAARLAEHRPHHGRALVLTERVFSMDGDRAPLGDILGIAESYDAWTLVDDAHGIGVVEDGPRAPLEMGTLSKALGSYGGYLCASRPVVDLMTSRARSFVYTTGLPPASAAAALEALAILEAEPERRARPLALARRFTARLGLPEAESAVVPVLVGEAQAALDISAALEAAGFLVVAIRPPTVPAGTARLRVAFSAAHDEAQVDALAEAVAALTGRA</sequence>
<evidence type="ECO:0000250" key="1"/>
<evidence type="ECO:0000305" key="2"/>
<comment type="function">
    <text evidence="1">Catalyzes the decarboxylative condensation of pimeloyl-[acyl-carrier protein] and L-alanine to produce 8-amino-7-oxononanoate (AON), [acyl-carrier protein], and carbon dioxide.</text>
</comment>
<comment type="catalytic activity">
    <reaction>
        <text>6-carboxyhexanoyl-[ACP] + L-alanine + H(+) = (8S)-8-amino-7-oxononanoate + holo-[ACP] + CO2</text>
        <dbReference type="Rhea" id="RHEA:42288"/>
        <dbReference type="Rhea" id="RHEA-COMP:9685"/>
        <dbReference type="Rhea" id="RHEA-COMP:9955"/>
        <dbReference type="ChEBI" id="CHEBI:15378"/>
        <dbReference type="ChEBI" id="CHEBI:16526"/>
        <dbReference type="ChEBI" id="CHEBI:57972"/>
        <dbReference type="ChEBI" id="CHEBI:64479"/>
        <dbReference type="ChEBI" id="CHEBI:78846"/>
        <dbReference type="ChEBI" id="CHEBI:149468"/>
        <dbReference type="EC" id="2.3.1.47"/>
    </reaction>
</comment>
<comment type="cofactor">
    <cofactor evidence="1">
        <name>pyridoxal 5'-phosphate</name>
        <dbReference type="ChEBI" id="CHEBI:597326"/>
    </cofactor>
</comment>
<comment type="pathway">
    <text>Cofactor biosynthesis; biotin biosynthesis.</text>
</comment>
<comment type="subunit">
    <text evidence="1">Homodimer.</text>
</comment>
<comment type="similarity">
    <text evidence="2">Belongs to the class-II pyridoxal-phosphate-dependent aminotransferase family. BioF subfamily.</text>
</comment>